<accession>Q2V4G1</accession>
<name>DEF63_ARATH</name>
<proteinExistence type="inferred from homology"/>
<sequence length="84" mass="9581">MDIRKTYVIIFFVGILTISFSSYNIGQTRLVVIQEQEPHCIGPCEIAFGNRPCNEECTSQQYAYGFCDYQTKGEDNPQCCCYTS</sequence>
<dbReference type="EMBL" id="AC007258">
    <property type="status" value="NOT_ANNOTATED_CDS"/>
    <property type="molecule type" value="Genomic_DNA"/>
</dbReference>
<dbReference type="EMBL" id="CP002684">
    <property type="protein sequence ID" value="AEE33624.1"/>
    <property type="molecule type" value="Genomic_DNA"/>
</dbReference>
<dbReference type="RefSeq" id="NP_001031209.1">
    <property type="nucleotide sequence ID" value="NM_001036132.1"/>
</dbReference>
<dbReference type="SMR" id="Q2V4G1"/>
<dbReference type="PaxDb" id="3702-AT1G59833.1"/>
<dbReference type="EnsemblPlants" id="AT1G59833.1">
    <property type="protein sequence ID" value="AT1G59833.1"/>
    <property type="gene ID" value="AT1G59833"/>
</dbReference>
<dbReference type="GeneID" id="3767572"/>
<dbReference type="Gramene" id="AT1G59833.1">
    <property type="protein sequence ID" value="AT1G59833.1"/>
    <property type="gene ID" value="AT1G59833"/>
</dbReference>
<dbReference type="KEGG" id="ath:AT1G59833"/>
<dbReference type="Araport" id="AT1G59833"/>
<dbReference type="TAIR" id="AT1G59833"/>
<dbReference type="HOGENOM" id="CLU_165205_0_0_1"/>
<dbReference type="InParanoid" id="Q2V4G1"/>
<dbReference type="PhylomeDB" id="Q2V4G1"/>
<dbReference type="PRO" id="PR:Q2V4G1"/>
<dbReference type="Proteomes" id="UP000006548">
    <property type="component" value="Chromosome 1"/>
</dbReference>
<dbReference type="ExpressionAtlas" id="Q2V4G1">
    <property type="expression patterns" value="baseline"/>
</dbReference>
<dbReference type="GO" id="GO:0005576">
    <property type="term" value="C:extracellular region"/>
    <property type="evidence" value="ECO:0007669"/>
    <property type="project" value="UniProtKB-SubCell"/>
</dbReference>
<dbReference type="GO" id="GO:0050832">
    <property type="term" value="P:defense response to fungus"/>
    <property type="evidence" value="ECO:0007669"/>
    <property type="project" value="UniProtKB-KW"/>
</dbReference>
<dbReference type="GO" id="GO:0031640">
    <property type="term" value="P:killing of cells of another organism"/>
    <property type="evidence" value="ECO:0007669"/>
    <property type="project" value="UniProtKB-KW"/>
</dbReference>
<dbReference type="InterPro" id="IPR056373">
    <property type="entry name" value="Defensin-like_dom"/>
</dbReference>
<dbReference type="Pfam" id="PF24552">
    <property type="entry name" value="Defensin"/>
    <property type="match status" value="1"/>
</dbReference>
<feature type="signal peptide" evidence="2">
    <location>
        <begin position="1"/>
        <end position="21"/>
    </location>
</feature>
<feature type="chain" id="PRO_0000379642" description="Putative defensin-like protein 63">
    <location>
        <begin position="22"/>
        <end position="84"/>
    </location>
</feature>
<feature type="disulfide bond" evidence="1">
    <location>
        <begin position="40"/>
        <end position="81"/>
    </location>
</feature>
<feature type="disulfide bond" evidence="1">
    <location>
        <begin position="44"/>
        <end position="67"/>
    </location>
</feature>
<feature type="disulfide bond" evidence="1">
    <location>
        <begin position="53"/>
        <end position="79"/>
    </location>
</feature>
<feature type="disulfide bond" evidence="1">
    <location>
        <begin position="57"/>
        <end position="80"/>
    </location>
</feature>
<keyword id="KW-0929">Antimicrobial</keyword>
<keyword id="KW-1015">Disulfide bond</keyword>
<keyword id="KW-0295">Fungicide</keyword>
<keyword id="KW-0611">Plant defense</keyword>
<keyword id="KW-1185">Reference proteome</keyword>
<keyword id="KW-0964">Secreted</keyword>
<keyword id="KW-0732">Signal</keyword>
<reference key="1">
    <citation type="journal article" date="2000" name="Nature">
        <title>Sequence and analysis of chromosome 1 of the plant Arabidopsis thaliana.</title>
        <authorList>
            <person name="Theologis A."/>
            <person name="Ecker J.R."/>
            <person name="Palm C.J."/>
            <person name="Federspiel N.A."/>
            <person name="Kaul S."/>
            <person name="White O."/>
            <person name="Alonso J."/>
            <person name="Altafi H."/>
            <person name="Araujo R."/>
            <person name="Bowman C.L."/>
            <person name="Brooks S.Y."/>
            <person name="Buehler E."/>
            <person name="Chan A."/>
            <person name="Chao Q."/>
            <person name="Chen H."/>
            <person name="Cheuk R.F."/>
            <person name="Chin C.W."/>
            <person name="Chung M.K."/>
            <person name="Conn L."/>
            <person name="Conway A.B."/>
            <person name="Conway A.R."/>
            <person name="Creasy T.H."/>
            <person name="Dewar K."/>
            <person name="Dunn P."/>
            <person name="Etgu P."/>
            <person name="Feldblyum T.V."/>
            <person name="Feng J.-D."/>
            <person name="Fong B."/>
            <person name="Fujii C.Y."/>
            <person name="Gill J.E."/>
            <person name="Goldsmith A.D."/>
            <person name="Haas B."/>
            <person name="Hansen N.F."/>
            <person name="Hughes B."/>
            <person name="Huizar L."/>
            <person name="Hunter J.L."/>
            <person name="Jenkins J."/>
            <person name="Johnson-Hopson C."/>
            <person name="Khan S."/>
            <person name="Khaykin E."/>
            <person name="Kim C.J."/>
            <person name="Koo H.L."/>
            <person name="Kremenetskaia I."/>
            <person name="Kurtz D.B."/>
            <person name="Kwan A."/>
            <person name="Lam B."/>
            <person name="Langin-Hooper S."/>
            <person name="Lee A."/>
            <person name="Lee J.M."/>
            <person name="Lenz C.A."/>
            <person name="Li J.H."/>
            <person name="Li Y.-P."/>
            <person name="Lin X."/>
            <person name="Liu S.X."/>
            <person name="Liu Z.A."/>
            <person name="Luros J.S."/>
            <person name="Maiti R."/>
            <person name="Marziali A."/>
            <person name="Militscher J."/>
            <person name="Miranda M."/>
            <person name="Nguyen M."/>
            <person name="Nierman W.C."/>
            <person name="Osborne B.I."/>
            <person name="Pai G."/>
            <person name="Peterson J."/>
            <person name="Pham P.K."/>
            <person name="Rizzo M."/>
            <person name="Rooney T."/>
            <person name="Rowley D."/>
            <person name="Sakano H."/>
            <person name="Salzberg S.L."/>
            <person name="Schwartz J.R."/>
            <person name="Shinn P."/>
            <person name="Southwick A.M."/>
            <person name="Sun H."/>
            <person name="Tallon L.J."/>
            <person name="Tambunga G."/>
            <person name="Toriumi M.J."/>
            <person name="Town C.D."/>
            <person name="Utterback T."/>
            <person name="Van Aken S."/>
            <person name="Vaysberg M."/>
            <person name="Vysotskaia V.S."/>
            <person name="Walker M."/>
            <person name="Wu D."/>
            <person name="Yu G."/>
            <person name="Fraser C.M."/>
            <person name="Venter J.C."/>
            <person name="Davis R.W."/>
        </authorList>
    </citation>
    <scope>NUCLEOTIDE SEQUENCE [LARGE SCALE GENOMIC DNA]</scope>
    <source>
        <strain>cv. Columbia</strain>
    </source>
</reference>
<reference key="2">
    <citation type="journal article" date="2017" name="Plant J.">
        <title>Araport11: a complete reannotation of the Arabidopsis thaliana reference genome.</title>
        <authorList>
            <person name="Cheng C.Y."/>
            <person name="Krishnakumar V."/>
            <person name="Chan A.P."/>
            <person name="Thibaud-Nissen F."/>
            <person name="Schobel S."/>
            <person name="Town C.D."/>
        </authorList>
    </citation>
    <scope>GENOME REANNOTATION</scope>
    <source>
        <strain>cv. Columbia</strain>
    </source>
</reference>
<reference key="3">
    <citation type="journal article" date="2005" name="Plant Physiol.">
        <title>Genome organization of more than 300 defensin-like genes in Arabidopsis.</title>
        <authorList>
            <person name="Silverstein K.A.T."/>
            <person name="Graham M.A."/>
            <person name="Paape T.D."/>
            <person name="VandenBosch K.A."/>
        </authorList>
    </citation>
    <scope>GENE FAMILY</scope>
</reference>
<gene>
    <name type="ordered locus">At1g59833</name>
    <name type="ORF">F23H11</name>
</gene>
<comment type="subcellular location">
    <subcellularLocation>
        <location evidence="1">Secreted</location>
    </subcellularLocation>
</comment>
<comment type="similarity">
    <text evidence="3">Belongs to the DEFL family.</text>
</comment>
<organism>
    <name type="scientific">Arabidopsis thaliana</name>
    <name type="common">Mouse-ear cress</name>
    <dbReference type="NCBI Taxonomy" id="3702"/>
    <lineage>
        <taxon>Eukaryota</taxon>
        <taxon>Viridiplantae</taxon>
        <taxon>Streptophyta</taxon>
        <taxon>Embryophyta</taxon>
        <taxon>Tracheophyta</taxon>
        <taxon>Spermatophyta</taxon>
        <taxon>Magnoliopsida</taxon>
        <taxon>eudicotyledons</taxon>
        <taxon>Gunneridae</taxon>
        <taxon>Pentapetalae</taxon>
        <taxon>rosids</taxon>
        <taxon>malvids</taxon>
        <taxon>Brassicales</taxon>
        <taxon>Brassicaceae</taxon>
        <taxon>Camelineae</taxon>
        <taxon>Arabidopsis</taxon>
    </lineage>
</organism>
<evidence type="ECO:0000250" key="1"/>
<evidence type="ECO:0000255" key="2"/>
<evidence type="ECO:0000305" key="3"/>
<protein>
    <recommendedName>
        <fullName>Putative defensin-like protein 63</fullName>
    </recommendedName>
</protein>